<reference key="1">
    <citation type="journal article" date="2005" name="Proc. Natl. Acad. Sci. U.S.A.">
        <title>The genome of the heartwater agent Ehrlichia ruminantium contains multiple tandem repeats of actively variable copy number.</title>
        <authorList>
            <person name="Collins N.E."/>
            <person name="Liebenberg J."/>
            <person name="de Villiers E.P."/>
            <person name="Brayton K.A."/>
            <person name="Louw E."/>
            <person name="Pretorius A."/>
            <person name="Faber F.E."/>
            <person name="van Heerden H."/>
            <person name="Josemans A."/>
            <person name="van Kleef M."/>
            <person name="Steyn H.C."/>
            <person name="van Strijp M.F."/>
            <person name="Zweygarth E."/>
            <person name="Jongejan F."/>
            <person name="Maillard J.C."/>
            <person name="Berthier D."/>
            <person name="Botha M."/>
            <person name="Joubert F."/>
            <person name="Corton C.H."/>
            <person name="Thomson N.R."/>
            <person name="Allsopp M.T."/>
            <person name="Allsopp B.A."/>
        </authorList>
    </citation>
    <scope>NUCLEOTIDE SEQUENCE [LARGE SCALE GENOMIC DNA]</scope>
    <source>
        <strain>Welgevonden</strain>
    </source>
</reference>
<reference key="2">
    <citation type="journal article" date="2006" name="J. Bacteriol.">
        <title>Comparative genomic analysis of three strains of Ehrlichia ruminantium reveals an active process of genome size plasticity.</title>
        <authorList>
            <person name="Frutos R."/>
            <person name="Viari A."/>
            <person name="Ferraz C."/>
            <person name="Morgat A."/>
            <person name="Eychenie S."/>
            <person name="Kandassamy Y."/>
            <person name="Chantal I."/>
            <person name="Bensaid A."/>
            <person name="Coissac E."/>
            <person name="Vachiery N."/>
            <person name="Demaille J."/>
            <person name="Martinez D."/>
        </authorList>
    </citation>
    <scope>NUCLEOTIDE SEQUENCE [LARGE SCALE GENOMIC DNA]</scope>
    <source>
        <strain>Welgevonden</strain>
    </source>
</reference>
<comment type="function">
    <text evidence="1">Binds to 23S rRNA. Forms part of two intersubunit bridges in the 70S ribosome.</text>
</comment>
<comment type="subunit">
    <text evidence="1">Part of the 50S ribosomal subunit. Forms a cluster with proteins L3 and L19. In the 70S ribosome, L14 and L19 interact and together make contacts with the 16S rRNA in bridges B5 and B8.</text>
</comment>
<comment type="similarity">
    <text evidence="1">Belongs to the universal ribosomal protein uL14 family.</text>
</comment>
<evidence type="ECO:0000255" key="1">
    <source>
        <dbReference type="HAMAP-Rule" id="MF_01367"/>
    </source>
</evidence>
<evidence type="ECO:0000305" key="2"/>
<name>RL14_EHRRW</name>
<protein>
    <recommendedName>
        <fullName evidence="1">Large ribosomal subunit protein uL14</fullName>
    </recommendedName>
    <alternativeName>
        <fullName evidence="2">50S ribosomal protein L14</fullName>
    </alternativeName>
</protein>
<sequence>MIQKNTLLDVADNSGARKVLCIGLLNGKKSASVGDVIVVSTKVVIPRGKVSKGKVYKAVIVRVKKAVRRLDGSVIKFSSNAVVLINDQGDPLGTRVFGPVKKLPFGLFSKVMSLAVEVL</sequence>
<organism>
    <name type="scientific">Ehrlichia ruminantium (strain Welgevonden)</name>
    <dbReference type="NCBI Taxonomy" id="254945"/>
    <lineage>
        <taxon>Bacteria</taxon>
        <taxon>Pseudomonadati</taxon>
        <taxon>Pseudomonadota</taxon>
        <taxon>Alphaproteobacteria</taxon>
        <taxon>Rickettsiales</taxon>
        <taxon>Anaplasmataceae</taxon>
        <taxon>Ehrlichia</taxon>
    </lineage>
</organism>
<accession>Q5HAT2</accession>
<accession>Q5FD68</accession>
<feature type="chain" id="PRO_0000355817" description="Large ribosomal subunit protein uL14">
    <location>
        <begin position="1"/>
        <end position="119"/>
    </location>
</feature>
<gene>
    <name evidence="1" type="primary">rplN</name>
    <name type="ordered locus">Erum5980</name>
    <name type="ordered locus">ERWE_CDS_06280</name>
</gene>
<proteinExistence type="inferred from homology"/>
<dbReference type="EMBL" id="CR767821">
    <property type="protein sequence ID" value="CAH58329.1"/>
    <property type="molecule type" value="Genomic_DNA"/>
</dbReference>
<dbReference type="EMBL" id="CR925678">
    <property type="protein sequence ID" value="CAI27122.1"/>
    <property type="molecule type" value="Genomic_DNA"/>
</dbReference>
<dbReference type="RefSeq" id="WP_011155279.1">
    <property type="nucleotide sequence ID" value="NC_005295.2"/>
</dbReference>
<dbReference type="SMR" id="Q5HAT2"/>
<dbReference type="GeneID" id="33058340"/>
<dbReference type="KEGG" id="eru:Erum5980"/>
<dbReference type="KEGG" id="erw:ERWE_CDS_06280"/>
<dbReference type="eggNOG" id="COG0093">
    <property type="taxonomic scope" value="Bacteria"/>
</dbReference>
<dbReference type="HOGENOM" id="CLU_095071_2_2_5"/>
<dbReference type="Proteomes" id="UP000001021">
    <property type="component" value="Chromosome"/>
</dbReference>
<dbReference type="GO" id="GO:0022625">
    <property type="term" value="C:cytosolic large ribosomal subunit"/>
    <property type="evidence" value="ECO:0007669"/>
    <property type="project" value="TreeGrafter"/>
</dbReference>
<dbReference type="GO" id="GO:0070180">
    <property type="term" value="F:large ribosomal subunit rRNA binding"/>
    <property type="evidence" value="ECO:0007669"/>
    <property type="project" value="TreeGrafter"/>
</dbReference>
<dbReference type="GO" id="GO:0003735">
    <property type="term" value="F:structural constituent of ribosome"/>
    <property type="evidence" value="ECO:0007669"/>
    <property type="project" value="InterPro"/>
</dbReference>
<dbReference type="GO" id="GO:0006412">
    <property type="term" value="P:translation"/>
    <property type="evidence" value="ECO:0007669"/>
    <property type="project" value="UniProtKB-UniRule"/>
</dbReference>
<dbReference type="CDD" id="cd00337">
    <property type="entry name" value="Ribosomal_uL14"/>
    <property type="match status" value="1"/>
</dbReference>
<dbReference type="Gene3D" id="2.40.150.20">
    <property type="entry name" value="Ribosomal protein L14"/>
    <property type="match status" value="1"/>
</dbReference>
<dbReference type="HAMAP" id="MF_01367">
    <property type="entry name" value="Ribosomal_uL14"/>
    <property type="match status" value="1"/>
</dbReference>
<dbReference type="InterPro" id="IPR000218">
    <property type="entry name" value="Ribosomal_uL14"/>
</dbReference>
<dbReference type="InterPro" id="IPR005745">
    <property type="entry name" value="Ribosomal_uL14_bac-type"/>
</dbReference>
<dbReference type="InterPro" id="IPR019972">
    <property type="entry name" value="Ribosomal_uL14_CS"/>
</dbReference>
<dbReference type="InterPro" id="IPR036853">
    <property type="entry name" value="Ribosomal_uL14_sf"/>
</dbReference>
<dbReference type="NCBIfam" id="TIGR01067">
    <property type="entry name" value="rplN_bact"/>
    <property type="match status" value="1"/>
</dbReference>
<dbReference type="PANTHER" id="PTHR11761">
    <property type="entry name" value="50S/60S RIBOSOMAL PROTEIN L14/L23"/>
    <property type="match status" value="1"/>
</dbReference>
<dbReference type="PANTHER" id="PTHR11761:SF3">
    <property type="entry name" value="LARGE RIBOSOMAL SUBUNIT PROTEIN UL14M"/>
    <property type="match status" value="1"/>
</dbReference>
<dbReference type="Pfam" id="PF00238">
    <property type="entry name" value="Ribosomal_L14"/>
    <property type="match status" value="1"/>
</dbReference>
<dbReference type="SMART" id="SM01374">
    <property type="entry name" value="Ribosomal_L14"/>
    <property type="match status" value="1"/>
</dbReference>
<dbReference type="SUPFAM" id="SSF50193">
    <property type="entry name" value="Ribosomal protein L14"/>
    <property type="match status" value="1"/>
</dbReference>
<dbReference type="PROSITE" id="PS00049">
    <property type="entry name" value="RIBOSOMAL_L14"/>
    <property type="match status" value="1"/>
</dbReference>
<keyword id="KW-0687">Ribonucleoprotein</keyword>
<keyword id="KW-0689">Ribosomal protein</keyword>
<keyword id="KW-0694">RNA-binding</keyword>
<keyword id="KW-0699">rRNA-binding</keyword>